<sequence length="688" mass="74416">MFKKLFGQLQRIGKALMLPVAILPAAGILLAFGNAMHNEQLVEIAPWLKNDIIVMISSVMEAAGQVVFDNLPLLFAVGTALGLAGGDGVAALAALVGYLIMNATMGKVLHITIDDIFSYAKGAKELSQAAKEPAHALVLGIPTLQTGVFGGIIMGALAAWCYNKFYNITLPPFLGFFAGKRFVPIVTSVVAIATGVLLSFAWPPIQDGLNSLSNFLLNKNLTLTTFIFGIIERSLIPFGLHHIFYSPFWFEFGSYTNHAGELVRGDQRIWMAQLKDGVPFTAGAFTTGKYPFMMFGLPAAAFAIYKNARPERKKVVGGLMLSAGLTAFLTGITEPLEFSFLFVAPVLYGIHVLLAGTSFLVMHLLGVKIGMTFSGGFIDYILYGLLNWDRSHALLVIPVGIVYAIVYYFLFDFAIRKFKLKTPGREDEETEIRNSSVAKLPFDVLDAMGGKENIKHLDACITRLRVEVVDKSKVDVAGIKALGASGVLEVGNNMQAIFGPKSDQIKHDMAKIMSGEITKPSETTVTEEMSDEPVHVEALGTTDIYAPGIGQIIPLSEVPDQVFAGKMMGDGVGFIPEKGEIVAPFDGTVKTIFPTKHAIGLESESGVEVLIHIGIDTVKLNGEGFESLINVDEKVTQGQPLMKVNLAYLKAHAPSIVTPMIITNLENKELVIEDVQDADPGKLIMTVK</sequence>
<keyword id="KW-1003">Cell membrane</keyword>
<keyword id="KW-0418">Kinase</keyword>
<keyword id="KW-0472">Membrane</keyword>
<keyword id="KW-0598">Phosphotransferase system</keyword>
<keyword id="KW-0762">Sugar transport</keyword>
<keyword id="KW-0808">Transferase</keyword>
<keyword id="KW-0812">Transmembrane</keyword>
<keyword id="KW-1133">Transmembrane helix</keyword>
<keyword id="KW-0813">Transport</keyword>
<feature type="chain" id="PRO_0000351417" description="PTS system glucoside-specific EIICBA component">
    <location>
        <begin position="1"/>
        <end position="688"/>
    </location>
</feature>
<feature type="transmembrane region" description="Helical" evidence="4">
    <location>
        <begin position="12"/>
        <end position="32"/>
    </location>
</feature>
<feature type="transmembrane region" description="Helical" evidence="4">
    <location>
        <begin position="81"/>
        <end position="101"/>
    </location>
</feature>
<feature type="transmembrane region" description="Helical" evidence="4">
    <location>
        <begin position="137"/>
        <end position="157"/>
    </location>
</feature>
<feature type="transmembrane region" description="Helical" evidence="4">
    <location>
        <begin position="182"/>
        <end position="202"/>
    </location>
</feature>
<feature type="transmembrane region" description="Helical" evidence="4">
    <location>
        <begin position="223"/>
        <end position="243"/>
    </location>
</feature>
<feature type="transmembrane region" description="Helical" evidence="4">
    <location>
        <begin position="284"/>
        <end position="304"/>
    </location>
</feature>
<feature type="transmembrane region" description="Helical" evidence="4">
    <location>
        <begin position="315"/>
        <end position="335"/>
    </location>
</feature>
<feature type="transmembrane region" description="Helical" evidence="4">
    <location>
        <begin position="340"/>
        <end position="360"/>
    </location>
</feature>
<feature type="transmembrane region" description="Helical" evidence="4">
    <location>
        <begin position="364"/>
        <end position="384"/>
    </location>
</feature>
<feature type="transmembrane region" description="Helical" evidence="4">
    <location>
        <begin position="395"/>
        <end position="415"/>
    </location>
</feature>
<feature type="domain" description="PTS EIIC type-1" evidence="4">
    <location>
        <begin position="3"/>
        <end position="427"/>
    </location>
</feature>
<feature type="domain" description="PTS EIIB type-1" evidence="3">
    <location>
        <begin position="438"/>
        <end position="519"/>
    </location>
</feature>
<feature type="domain" description="PTS EIIA type-1" evidence="2">
    <location>
        <begin position="560"/>
        <end position="664"/>
    </location>
</feature>
<feature type="active site" description="Phosphocysteine intermediate; for EIIB activity" evidence="3">
    <location>
        <position position="460"/>
    </location>
</feature>
<feature type="active site" description="Tele-phosphohistidine intermediate; for EIIA activity" evidence="2">
    <location>
        <position position="612"/>
    </location>
</feature>
<comment type="function">
    <text evidence="1">The phosphoenolpyruvate-dependent sugar phosphotransferase system (sugar PTS), a major carbohydrate active -transport system, catalyzes the phosphorylation of incoming sugar substrates concomitantly with their translocation across the cell membrane. This system is involved in alpha- and beta-glucoside transport (By similarity).</text>
</comment>
<comment type="subcellular location">
    <subcellularLocation>
        <location evidence="4">Cell membrane</location>
        <topology evidence="4">Multi-pass membrane protein</topology>
    </subcellularLocation>
</comment>
<comment type="domain">
    <text>The EIIC domain forms the PTS system translocation channel and contains the specific substrate-binding site.</text>
</comment>
<comment type="domain">
    <text>The EIIB domain is phosphorylated by phospho-EIIA on a cysteinyl or histidyl residue, depending on the transported sugar. Then, it transfers the phosphoryl group to the sugar substrate concomitantly with the sugar uptake processed by the EIIC domain.</text>
</comment>
<comment type="domain">
    <text>The EIIA domain is phosphorylated by phospho-HPr on a histidyl residue. Then, it transfers the phosphoryl group to the EIIB domain.</text>
</comment>
<comment type="sequence caution" evidence="5">
    <conflict type="erroneous initiation">
        <sequence resource="EMBL-CDS" id="ABX30516"/>
    </conflict>
</comment>
<reference key="1">
    <citation type="journal article" date="2007" name="BMC Microbiol.">
        <title>Subtle genetic changes enhance virulence of methicillin resistant and sensitive Staphylococcus aureus.</title>
        <authorList>
            <person name="Highlander S.K."/>
            <person name="Hulten K.G."/>
            <person name="Qin X."/>
            <person name="Jiang H."/>
            <person name="Yerrapragada S."/>
            <person name="Mason E.O. Jr."/>
            <person name="Shang Y."/>
            <person name="Williams T.M."/>
            <person name="Fortunov R.M."/>
            <person name="Liu Y."/>
            <person name="Igboeli O."/>
            <person name="Petrosino J."/>
            <person name="Tirumalai M."/>
            <person name="Uzman A."/>
            <person name="Fox G.E."/>
            <person name="Cardenas A.M."/>
            <person name="Muzny D.M."/>
            <person name="Hemphill L."/>
            <person name="Ding Y."/>
            <person name="Dugan S."/>
            <person name="Blyth P.R."/>
            <person name="Buhay C.J."/>
            <person name="Dinh H.H."/>
            <person name="Hawes A.C."/>
            <person name="Holder M."/>
            <person name="Kovar C.L."/>
            <person name="Lee S.L."/>
            <person name="Liu W."/>
            <person name="Nazareth L.V."/>
            <person name="Wang Q."/>
            <person name="Zhou J."/>
            <person name="Kaplan S.L."/>
            <person name="Weinstock G.M."/>
        </authorList>
    </citation>
    <scope>NUCLEOTIDE SEQUENCE [LARGE SCALE GENOMIC DNA]</scope>
    <source>
        <strain>USA300 / TCH1516</strain>
    </source>
</reference>
<dbReference type="EC" id="2.7.1.-"/>
<dbReference type="EMBL" id="CP000730">
    <property type="protein sequence ID" value="ABX30516.1"/>
    <property type="status" value="ALT_INIT"/>
    <property type="molecule type" value="Genomic_DNA"/>
</dbReference>
<dbReference type="SMR" id="A8Z3D6"/>
<dbReference type="KEGG" id="sax:USA300HOU_2530"/>
<dbReference type="HOGENOM" id="CLU_012312_1_1_9"/>
<dbReference type="PHI-base" id="PHI:6309"/>
<dbReference type="GO" id="GO:0005886">
    <property type="term" value="C:plasma membrane"/>
    <property type="evidence" value="ECO:0007669"/>
    <property type="project" value="UniProtKB-SubCell"/>
</dbReference>
<dbReference type="GO" id="GO:0055056">
    <property type="term" value="F:D-glucose transmembrane transporter activity"/>
    <property type="evidence" value="ECO:0007669"/>
    <property type="project" value="InterPro"/>
</dbReference>
<dbReference type="GO" id="GO:0016301">
    <property type="term" value="F:kinase activity"/>
    <property type="evidence" value="ECO:0007669"/>
    <property type="project" value="UniProtKB-KW"/>
</dbReference>
<dbReference type="GO" id="GO:0008982">
    <property type="term" value="F:protein-N(PI)-phosphohistidine-sugar phosphotransferase activity"/>
    <property type="evidence" value="ECO:0007669"/>
    <property type="project" value="InterPro"/>
</dbReference>
<dbReference type="GO" id="GO:0090563">
    <property type="term" value="F:protein-phosphocysteine-sugar phosphotransferase activity"/>
    <property type="evidence" value="ECO:0007669"/>
    <property type="project" value="TreeGrafter"/>
</dbReference>
<dbReference type="GO" id="GO:1904659">
    <property type="term" value="P:D-glucose transmembrane transport"/>
    <property type="evidence" value="ECO:0007669"/>
    <property type="project" value="InterPro"/>
</dbReference>
<dbReference type="GO" id="GO:0009401">
    <property type="term" value="P:phosphoenolpyruvate-dependent sugar phosphotransferase system"/>
    <property type="evidence" value="ECO:0007669"/>
    <property type="project" value="UniProtKB-KW"/>
</dbReference>
<dbReference type="CDD" id="cd00212">
    <property type="entry name" value="PTS_IIB_glc"/>
    <property type="match status" value="1"/>
</dbReference>
<dbReference type="FunFam" id="2.70.70.10:FF:000001">
    <property type="entry name" value="PTS system glucose-specific IIA component"/>
    <property type="match status" value="1"/>
</dbReference>
<dbReference type="FunFam" id="3.30.1360.60:FF:000001">
    <property type="entry name" value="PTS system glucose-specific IIBC component PtsG"/>
    <property type="match status" value="1"/>
</dbReference>
<dbReference type="Gene3D" id="2.70.70.10">
    <property type="entry name" value="Glucose Permease (Domain IIA)"/>
    <property type="match status" value="1"/>
</dbReference>
<dbReference type="Gene3D" id="3.30.1360.60">
    <property type="entry name" value="Glucose permease domain IIB"/>
    <property type="match status" value="1"/>
</dbReference>
<dbReference type="InterPro" id="IPR011055">
    <property type="entry name" value="Dup_hybrid_motif"/>
</dbReference>
<dbReference type="InterPro" id="IPR036878">
    <property type="entry name" value="Glu_permease_IIB"/>
</dbReference>
<dbReference type="InterPro" id="IPR018113">
    <property type="entry name" value="PTrfase_EIIB_Cys"/>
</dbReference>
<dbReference type="InterPro" id="IPR001127">
    <property type="entry name" value="PTS_EIIA_1_perm"/>
</dbReference>
<dbReference type="InterPro" id="IPR003352">
    <property type="entry name" value="PTS_EIIC"/>
</dbReference>
<dbReference type="InterPro" id="IPR013013">
    <property type="entry name" value="PTS_EIIC_1"/>
</dbReference>
<dbReference type="InterPro" id="IPR050429">
    <property type="entry name" value="PTS_Glucose_EIICBA"/>
</dbReference>
<dbReference type="InterPro" id="IPR001996">
    <property type="entry name" value="PTS_IIB_1"/>
</dbReference>
<dbReference type="InterPro" id="IPR011299">
    <property type="entry name" value="PTS_IIBC_glc"/>
</dbReference>
<dbReference type="NCBIfam" id="TIGR00826">
    <property type="entry name" value="EIIB_glc"/>
    <property type="match status" value="1"/>
</dbReference>
<dbReference type="NCBIfam" id="TIGR00830">
    <property type="entry name" value="PTBA"/>
    <property type="match status" value="1"/>
</dbReference>
<dbReference type="NCBIfam" id="TIGR02002">
    <property type="entry name" value="PTS-II-BC-glcB"/>
    <property type="match status" value="1"/>
</dbReference>
<dbReference type="PANTHER" id="PTHR30009">
    <property type="entry name" value="CYTOCHROME C-TYPE SYNTHESIS PROTEIN AND PTS TRANSMEMBRANE COMPONENT"/>
    <property type="match status" value="1"/>
</dbReference>
<dbReference type="PANTHER" id="PTHR30009:SF20">
    <property type="entry name" value="PTS SYSTEM GLUCOSE-SPECIFIC EIICB COMPONENT-RELATED"/>
    <property type="match status" value="1"/>
</dbReference>
<dbReference type="Pfam" id="PF00358">
    <property type="entry name" value="PTS_EIIA_1"/>
    <property type="match status" value="1"/>
</dbReference>
<dbReference type="Pfam" id="PF00367">
    <property type="entry name" value="PTS_EIIB"/>
    <property type="match status" value="1"/>
</dbReference>
<dbReference type="Pfam" id="PF02378">
    <property type="entry name" value="PTS_EIIC"/>
    <property type="match status" value="1"/>
</dbReference>
<dbReference type="SUPFAM" id="SSF51261">
    <property type="entry name" value="Duplicated hybrid motif"/>
    <property type="match status" value="1"/>
</dbReference>
<dbReference type="SUPFAM" id="SSF55604">
    <property type="entry name" value="Glucose permease domain IIB"/>
    <property type="match status" value="1"/>
</dbReference>
<dbReference type="PROSITE" id="PS51093">
    <property type="entry name" value="PTS_EIIA_TYPE_1"/>
    <property type="match status" value="1"/>
</dbReference>
<dbReference type="PROSITE" id="PS00371">
    <property type="entry name" value="PTS_EIIA_TYPE_1_HIS"/>
    <property type="match status" value="1"/>
</dbReference>
<dbReference type="PROSITE" id="PS51098">
    <property type="entry name" value="PTS_EIIB_TYPE_1"/>
    <property type="match status" value="1"/>
</dbReference>
<dbReference type="PROSITE" id="PS01035">
    <property type="entry name" value="PTS_EIIB_TYPE_1_CYS"/>
    <property type="match status" value="1"/>
</dbReference>
<dbReference type="PROSITE" id="PS51103">
    <property type="entry name" value="PTS_EIIC_TYPE_1"/>
    <property type="match status" value="1"/>
</dbReference>
<accession>A8Z3D6</accession>
<proteinExistence type="inferred from homology"/>
<name>PTU3C_STAAT</name>
<protein>
    <recommendedName>
        <fullName>PTS system glucoside-specific EIICBA component</fullName>
    </recommendedName>
    <domain>
        <recommendedName>
            <fullName>Glucoside permease IIC component</fullName>
        </recommendedName>
        <alternativeName>
            <fullName>PTS system glucoside-specific EIIC component</fullName>
        </alternativeName>
    </domain>
    <domain>
        <recommendedName>
            <fullName>Glucoside-specific phosphotransferase enzyme IIB component</fullName>
            <ecNumber>2.7.1.-</ecNumber>
        </recommendedName>
        <alternativeName>
            <fullName>PTS system glucoside-specific EIIB component</fullName>
        </alternativeName>
    </domain>
    <domain>
        <recommendedName>
            <fullName>Glucoside-specific phosphotransferase enzyme IIA component</fullName>
        </recommendedName>
        <alternativeName>
            <fullName>PTS system glucoside-specific EIIA component</fullName>
        </alternativeName>
    </domain>
</protein>
<organism>
    <name type="scientific">Staphylococcus aureus (strain USA300 / TCH1516)</name>
    <dbReference type="NCBI Taxonomy" id="451516"/>
    <lineage>
        <taxon>Bacteria</taxon>
        <taxon>Bacillati</taxon>
        <taxon>Bacillota</taxon>
        <taxon>Bacilli</taxon>
        <taxon>Bacillales</taxon>
        <taxon>Staphylococcaceae</taxon>
        <taxon>Staphylococcus</taxon>
    </lineage>
</organism>
<gene>
    <name type="primary">glcB</name>
    <name type="ordered locus">USA300HOU_2530</name>
</gene>
<evidence type="ECO:0000250" key="1"/>
<evidence type="ECO:0000255" key="2">
    <source>
        <dbReference type="PROSITE-ProRule" id="PRU00416"/>
    </source>
</evidence>
<evidence type="ECO:0000255" key="3">
    <source>
        <dbReference type="PROSITE-ProRule" id="PRU00421"/>
    </source>
</evidence>
<evidence type="ECO:0000255" key="4">
    <source>
        <dbReference type="PROSITE-ProRule" id="PRU00426"/>
    </source>
</evidence>
<evidence type="ECO:0000305" key="5"/>